<sequence length="371" mass="40859">MADSQRRPRVFFDIQIGNEKTGRIALELVLVPKTAENFRALCTGEKGMGKQGKPLHFKGSIFHRVIKQFMIQGGDFTAFNGTGGESIYGEKFPDENFELKHDKPFLLSMANSGPGTNGSQFFITTVPTPHLDGKHVVFGEVINGKSVVRKVENMNTQADKPVKDVTIVECGELTGQDYDDADKQTPDATGDPYEDFPDDHQGEELNAQVCFKIASELKNFGNAAFKSGNLALGLEKYQKGLRYLHEFPEPDENDPKELDGQIKALRFALHSNSSLLANKLAQYGNGRSWATYALDTANAANAKDADKAKAYYRRAVASSGLKEEDEALKDLQEAEKLAPGDAGITNEIAKVKKAIKDRQAKERATAQKFFS</sequence>
<evidence type="ECO:0000250" key="1"/>
<evidence type="ECO:0000255" key="2">
    <source>
        <dbReference type="PROSITE-ProRule" id="PRU00156"/>
    </source>
</evidence>
<evidence type="ECO:0000256" key="3">
    <source>
        <dbReference type="SAM" id="MobiDB-lite"/>
    </source>
</evidence>
<evidence type="ECO:0000305" key="4"/>
<protein>
    <recommendedName>
        <fullName>Peptidyl-prolyl cis-trans isomerase D</fullName>
        <shortName>PPIase D</shortName>
        <ecNumber>5.2.1.8</ecNumber>
    </recommendedName>
    <alternativeName>
        <fullName>Rotamase D</fullName>
    </alternativeName>
</protein>
<accession>Q2U0E0</accession>
<feature type="chain" id="PRO_0000232943" description="Peptidyl-prolyl cis-trans isomerase D">
    <location>
        <begin position="1"/>
        <end position="371"/>
    </location>
</feature>
<feature type="domain" description="PPIase cyclophilin-type" evidence="2">
    <location>
        <begin position="11"/>
        <end position="172"/>
    </location>
</feature>
<feature type="repeat" description="TPR 1">
    <location>
        <begin position="214"/>
        <end position="247"/>
    </location>
</feature>
<feature type="repeat" description="TPR 2">
    <location>
        <begin position="267"/>
        <end position="300"/>
    </location>
</feature>
<feature type="repeat" description="TPR 3">
    <location>
        <begin position="308"/>
        <end position="341"/>
    </location>
</feature>
<feature type="region of interest" description="Disordered" evidence="3">
    <location>
        <begin position="175"/>
        <end position="195"/>
    </location>
</feature>
<gene>
    <name type="primary">cpr6</name>
    <name type="ORF">AO090011000475</name>
</gene>
<comment type="function">
    <text evidence="1">PPIases accelerate the folding of proteins. It catalyzes the cis-trans isomerization of proline imidic peptide bonds in oligopeptides (By similarity).</text>
</comment>
<comment type="catalytic activity">
    <reaction>
        <text>[protein]-peptidylproline (omega=180) = [protein]-peptidylproline (omega=0)</text>
        <dbReference type="Rhea" id="RHEA:16237"/>
        <dbReference type="Rhea" id="RHEA-COMP:10747"/>
        <dbReference type="Rhea" id="RHEA-COMP:10748"/>
        <dbReference type="ChEBI" id="CHEBI:83833"/>
        <dbReference type="ChEBI" id="CHEBI:83834"/>
        <dbReference type="EC" id="5.2.1.8"/>
    </reaction>
</comment>
<comment type="subcellular location">
    <subcellularLocation>
        <location evidence="1">Cytoplasm</location>
    </subcellularLocation>
</comment>
<comment type="similarity">
    <text evidence="4">Belongs to the cyclophilin-type PPIase family. PPIase D subfamily.</text>
</comment>
<reference key="1">
    <citation type="journal article" date="2005" name="Nature">
        <title>Genome sequencing and analysis of Aspergillus oryzae.</title>
        <authorList>
            <person name="Machida M."/>
            <person name="Asai K."/>
            <person name="Sano M."/>
            <person name="Tanaka T."/>
            <person name="Kumagai T."/>
            <person name="Terai G."/>
            <person name="Kusumoto K."/>
            <person name="Arima T."/>
            <person name="Akita O."/>
            <person name="Kashiwagi Y."/>
            <person name="Abe K."/>
            <person name="Gomi K."/>
            <person name="Horiuchi H."/>
            <person name="Kitamoto K."/>
            <person name="Kobayashi T."/>
            <person name="Takeuchi M."/>
            <person name="Denning D.W."/>
            <person name="Galagan J.E."/>
            <person name="Nierman W.C."/>
            <person name="Yu J."/>
            <person name="Archer D.B."/>
            <person name="Bennett J.W."/>
            <person name="Bhatnagar D."/>
            <person name="Cleveland T.E."/>
            <person name="Fedorova N.D."/>
            <person name="Gotoh O."/>
            <person name="Horikawa H."/>
            <person name="Hosoyama A."/>
            <person name="Ichinomiya M."/>
            <person name="Igarashi R."/>
            <person name="Iwashita K."/>
            <person name="Juvvadi P.R."/>
            <person name="Kato M."/>
            <person name="Kato Y."/>
            <person name="Kin T."/>
            <person name="Kokubun A."/>
            <person name="Maeda H."/>
            <person name="Maeyama N."/>
            <person name="Maruyama J."/>
            <person name="Nagasaki H."/>
            <person name="Nakajima T."/>
            <person name="Oda K."/>
            <person name="Okada K."/>
            <person name="Paulsen I."/>
            <person name="Sakamoto K."/>
            <person name="Sawano T."/>
            <person name="Takahashi M."/>
            <person name="Takase K."/>
            <person name="Terabayashi Y."/>
            <person name="Wortman J.R."/>
            <person name="Yamada O."/>
            <person name="Yamagata Y."/>
            <person name="Anazawa H."/>
            <person name="Hata Y."/>
            <person name="Koide Y."/>
            <person name="Komori T."/>
            <person name="Koyama Y."/>
            <person name="Minetoki T."/>
            <person name="Suharnan S."/>
            <person name="Tanaka A."/>
            <person name="Isono K."/>
            <person name="Kuhara S."/>
            <person name="Ogasawara N."/>
            <person name="Kikuchi H."/>
        </authorList>
    </citation>
    <scope>NUCLEOTIDE SEQUENCE [LARGE SCALE GENOMIC DNA]</scope>
    <source>
        <strain>ATCC 42149 / RIB 40</strain>
    </source>
</reference>
<proteinExistence type="inferred from homology"/>
<organism>
    <name type="scientific">Aspergillus oryzae (strain ATCC 42149 / RIB 40)</name>
    <name type="common">Yellow koji mold</name>
    <dbReference type="NCBI Taxonomy" id="510516"/>
    <lineage>
        <taxon>Eukaryota</taxon>
        <taxon>Fungi</taxon>
        <taxon>Dikarya</taxon>
        <taxon>Ascomycota</taxon>
        <taxon>Pezizomycotina</taxon>
        <taxon>Eurotiomycetes</taxon>
        <taxon>Eurotiomycetidae</taxon>
        <taxon>Eurotiales</taxon>
        <taxon>Aspergillaceae</taxon>
        <taxon>Aspergillus</taxon>
        <taxon>Aspergillus subgen. Circumdati</taxon>
    </lineage>
</organism>
<name>PPID_ASPOR</name>
<keyword id="KW-0963">Cytoplasm</keyword>
<keyword id="KW-0413">Isomerase</keyword>
<keyword id="KW-1185">Reference proteome</keyword>
<keyword id="KW-0677">Repeat</keyword>
<keyword id="KW-0697">Rotamase</keyword>
<keyword id="KW-0802">TPR repeat</keyword>
<dbReference type="EC" id="5.2.1.8"/>
<dbReference type="EMBL" id="BA000055">
    <property type="protein sequence ID" value="BAE64975.1"/>
    <property type="molecule type" value="Genomic_DNA"/>
</dbReference>
<dbReference type="SMR" id="Q2U0E0"/>
<dbReference type="STRING" id="510516.Q2U0E0"/>
<dbReference type="EnsemblFungi" id="BAE64975">
    <property type="protein sequence ID" value="BAE64975"/>
    <property type="gene ID" value="AO090011000475"/>
</dbReference>
<dbReference type="HOGENOM" id="CLU_012062_37_0_1"/>
<dbReference type="Proteomes" id="UP000006564">
    <property type="component" value="Chromosome 7"/>
</dbReference>
<dbReference type="GO" id="GO:0005737">
    <property type="term" value="C:cytoplasm"/>
    <property type="evidence" value="ECO:0007669"/>
    <property type="project" value="UniProtKB-SubCell"/>
</dbReference>
<dbReference type="GO" id="GO:0043231">
    <property type="term" value="C:intracellular membrane-bounded organelle"/>
    <property type="evidence" value="ECO:0007669"/>
    <property type="project" value="TreeGrafter"/>
</dbReference>
<dbReference type="GO" id="GO:0016018">
    <property type="term" value="F:cyclosporin A binding"/>
    <property type="evidence" value="ECO:0007669"/>
    <property type="project" value="TreeGrafter"/>
</dbReference>
<dbReference type="GO" id="GO:0003755">
    <property type="term" value="F:peptidyl-prolyl cis-trans isomerase activity"/>
    <property type="evidence" value="ECO:0007669"/>
    <property type="project" value="UniProtKB-KW"/>
</dbReference>
<dbReference type="GO" id="GO:0043022">
    <property type="term" value="F:ribosome binding"/>
    <property type="evidence" value="ECO:0007669"/>
    <property type="project" value="EnsemblFungi"/>
</dbReference>
<dbReference type="GO" id="GO:0051082">
    <property type="term" value="F:unfolded protein binding"/>
    <property type="evidence" value="ECO:0007669"/>
    <property type="project" value="EnsemblFungi"/>
</dbReference>
<dbReference type="GO" id="GO:0042026">
    <property type="term" value="P:protein refolding"/>
    <property type="evidence" value="ECO:0007669"/>
    <property type="project" value="EnsemblFungi"/>
</dbReference>
<dbReference type="CDD" id="cd01926">
    <property type="entry name" value="cyclophilin_ABH_like"/>
    <property type="match status" value="1"/>
</dbReference>
<dbReference type="FunFam" id="2.40.100.10:FF:000009">
    <property type="entry name" value="Peptidyl-prolyl cis-trans isomerase D"/>
    <property type="match status" value="1"/>
</dbReference>
<dbReference type="FunFam" id="1.25.40.10:FF:000029">
    <property type="entry name" value="peptidyl-prolyl cis-trans isomerase D"/>
    <property type="match status" value="1"/>
</dbReference>
<dbReference type="Gene3D" id="2.40.100.10">
    <property type="entry name" value="Cyclophilin-like"/>
    <property type="match status" value="1"/>
</dbReference>
<dbReference type="Gene3D" id="1.25.40.10">
    <property type="entry name" value="Tetratricopeptide repeat domain"/>
    <property type="match status" value="1"/>
</dbReference>
<dbReference type="InterPro" id="IPR029000">
    <property type="entry name" value="Cyclophilin-like_dom_sf"/>
</dbReference>
<dbReference type="InterPro" id="IPR020892">
    <property type="entry name" value="Cyclophilin-type_PPIase_CS"/>
</dbReference>
<dbReference type="InterPro" id="IPR002130">
    <property type="entry name" value="Cyclophilin-type_PPIase_dom"/>
</dbReference>
<dbReference type="InterPro" id="IPR011990">
    <property type="entry name" value="TPR-like_helical_dom_sf"/>
</dbReference>
<dbReference type="InterPro" id="IPR019734">
    <property type="entry name" value="TPR_rpt"/>
</dbReference>
<dbReference type="PANTHER" id="PTHR11071">
    <property type="entry name" value="PEPTIDYL-PROLYL CIS-TRANS ISOMERASE"/>
    <property type="match status" value="1"/>
</dbReference>
<dbReference type="PANTHER" id="PTHR11071:SF561">
    <property type="entry name" value="PEPTIDYL-PROLYL CIS-TRANS ISOMERASE D-RELATED"/>
    <property type="match status" value="1"/>
</dbReference>
<dbReference type="Pfam" id="PF00160">
    <property type="entry name" value="Pro_isomerase"/>
    <property type="match status" value="1"/>
</dbReference>
<dbReference type="PRINTS" id="PR00153">
    <property type="entry name" value="CSAPPISMRASE"/>
</dbReference>
<dbReference type="SMART" id="SM00028">
    <property type="entry name" value="TPR"/>
    <property type="match status" value="2"/>
</dbReference>
<dbReference type="SUPFAM" id="SSF50891">
    <property type="entry name" value="Cyclophilin-like"/>
    <property type="match status" value="1"/>
</dbReference>
<dbReference type="SUPFAM" id="SSF48452">
    <property type="entry name" value="TPR-like"/>
    <property type="match status" value="1"/>
</dbReference>
<dbReference type="PROSITE" id="PS00170">
    <property type="entry name" value="CSA_PPIASE_1"/>
    <property type="match status" value="1"/>
</dbReference>
<dbReference type="PROSITE" id="PS50072">
    <property type="entry name" value="CSA_PPIASE_2"/>
    <property type="match status" value="1"/>
</dbReference>
<dbReference type="PROSITE" id="PS50005">
    <property type="entry name" value="TPR"/>
    <property type="match status" value="2"/>
</dbReference>
<dbReference type="PROSITE" id="PS50293">
    <property type="entry name" value="TPR_REGION"/>
    <property type="match status" value="1"/>
</dbReference>